<comment type="function">
    <text evidence="1">One of the early assembly proteins it binds 23S rRNA. One of the proteins that surrounds the polypeptide exit tunnel on the outside of the ribosome. Forms the main docking site for trigger factor binding to the ribosome.</text>
</comment>
<comment type="subunit">
    <text evidence="1">Part of the 50S ribosomal subunit. Contacts protein L29, and trigger factor when it is bound to the ribosome.</text>
</comment>
<comment type="similarity">
    <text evidence="1">Belongs to the universal ribosomal protein uL23 family.</text>
</comment>
<reference key="1">
    <citation type="submission" date="2006-01" db="EMBL/GenBank/DDBJ databases">
        <title>Complete sequence of Anaeromyxobacter dehalogenans 2CP-C.</title>
        <authorList>
            <person name="Copeland A."/>
            <person name="Lucas S."/>
            <person name="Lapidus A."/>
            <person name="Barry K."/>
            <person name="Detter J.C."/>
            <person name="Glavina T."/>
            <person name="Hammon N."/>
            <person name="Israni S."/>
            <person name="Pitluck S."/>
            <person name="Brettin T."/>
            <person name="Bruce D."/>
            <person name="Han C."/>
            <person name="Tapia R."/>
            <person name="Gilna P."/>
            <person name="Kiss H."/>
            <person name="Schmutz J."/>
            <person name="Larimer F."/>
            <person name="Land M."/>
            <person name="Kyrpides N."/>
            <person name="Anderson I."/>
            <person name="Sanford R.A."/>
            <person name="Ritalahti K.M."/>
            <person name="Thomas H.S."/>
            <person name="Kirby J.R."/>
            <person name="Zhulin I.B."/>
            <person name="Loeffler F.E."/>
            <person name="Richardson P."/>
        </authorList>
    </citation>
    <scope>NUCLEOTIDE SEQUENCE [LARGE SCALE GENOMIC DNA]</scope>
    <source>
        <strain>2CP-C</strain>
    </source>
</reference>
<name>RL23_ANADE</name>
<proteinExistence type="inferred from homology"/>
<dbReference type="EMBL" id="CP000251">
    <property type="protein sequence ID" value="ABC81715.1"/>
    <property type="molecule type" value="Genomic_DNA"/>
</dbReference>
<dbReference type="RefSeq" id="WP_011420998.1">
    <property type="nucleotide sequence ID" value="NC_007760.1"/>
</dbReference>
<dbReference type="SMR" id="Q2IJ87"/>
<dbReference type="STRING" id="290397.Adeh_1944"/>
<dbReference type="KEGG" id="ade:Adeh_1944"/>
<dbReference type="eggNOG" id="COG0089">
    <property type="taxonomic scope" value="Bacteria"/>
</dbReference>
<dbReference type="HOGENOM" id="CLU_037562_3_1_7"/>
<dbReference type="OrthoDB" id="9793353at2"/>
<dbReference type="Proteomes" id="UP000001935">
    <property type="component" value="Chromosome"/>
</dbReference>
<dbReference type="GO" id="GO:1990904">
    <property type="term" value="C:ribonucleoprotein complex"/>
    <property type="evidence" value="ECO:0007669"/>
    <property type="project" value="UniProtKB-KW"/>
</dbReference>
<dbReference type="GO" id="GO:0005840">
    <property type="term" value="C:ribosome"/>
    <property type="evidence" value="ECO:0007669"/>
    <property type="project" value="UniProtKB-KW"/>
</dbReference>
<dbReference type="GO" id="GO:0019843">
    <property type="term" value="F:rRNA binding"/>
    <property type="evidence" value="ECO:0007669"/>
    <property type="project" value="UniProtKB-UniRule"/>
</dbReference>
<dbReference type="GO" id="GO:0003735">
    <property type="term" value="F:structural constituent of ribosome"/>
    <property type="evidence" value="ECO:0007669"/>
    <property type="project" value="InterPro"/>
</dbReference>
<dbReference type="GO" id="GO:0006412">
    <property type="term" value="P:translation"/>
    <property type="evidence" value="ECO:0007669"/>
    <property type="project" value="UniProtKB-UniRule"/>
</dbReference>
<dbReference type="FunFam" id="3.30.70.330:FF:000001">
    <property type="entry name" value="50S ribosomal protein L23"/>
    <property type="match status" value="1"/>
</dbReference>
<dbReference type="Gene3D" id="3.30.70.330">
    <property type="match status" value="1"/>
</dbReference>
<dbReference type="HAMAP" id="MF_01369_B">
    <property type="entry name" value="Ribosomal_uL23_B"/>
    <property type="match status" value="1"/>
</dbReference>
<dbReference type="InterPro" id="IPR012677">
    <property type="entry name" value="Nucleotide-bd_a/b_plait_sf"/>
</dbReference>
<dbReference type="InterPro" id="IPR013025">
    <property type="entry name" value="Ribosomal_uL23-like"/>
</dbReference>
<dbReference type="InterPro" id="IPR012678">
    <property type="entry name" value="Ribosomal_uL23/eL15/eS24_sf"/>
</dbReference>
<dbReference type="InterPro" id="IPR001014">
    <property type="entry name" value="Ribosomal_uL23_CS"/>
</dbReference>
<dbReference type="NCBIfam" id="NF004359">
    <property type="entry name" value="PRK05738.1-3"/>
    <property type="match status" value="1"/>
</dbReference>
<dbReference type="NCBIfam" id="NF004363">
    <property type="entry name" value="PRK05738.2-4"/>
    <property type="match status" value="1"/>
</dbReference>
<dbReference type="NCBIfam" id="NF004366">
    <property type="entry name" value="PRK05738.3-2"/>
    <property type="match status" value="1"/>
</dbReference>
<dbReference type="PANTHER" id="PTHR11620">
    <property type="entry name" value="60S RIBOSOMAL PROTEIN L23A"/>
    <property type="match status" value="1"/>
</dbReference>
<dbReference type="Pfam" id="PF00276">
    <property type="entry name" value="Ribosomal_L23"/>
    <property type="match status" value="1"/>
</dbReference>
<dbReference type="SUPFAM" id="SSF54189">
    <property type="entry name" value="Ribosomal proteins S24e, L23 and L15e"/>
    <property type="match status" value="1"/>
</dbReference>
<dbReference type="PROSITE" id="PS00050">
    <property type="entry name" value="RIBOSOMAL_L23"/>
    <property type="match status" value="1"/>
</dbReference>
<protein>
    <recommendedName>
        <fullName evidence="1">Large ribosomal subunit protein uL23</fullName>
    </recommendedName>
    <alternativeName>
        <fullName evidence="2">50S ribosomal protein L23</fullName>
    </alternativeName>
</protein>
<sequence length="97" mass="11101">MNLAVQDVVKRPLITEKAERAREASRQYAFEVHRDATKIQVKQAVEKLFNVHVLDVRTAIARGKNKRVGRNVGRRPNWKKAYVTLKEGDTIALFEGT</sequence>
<accession>Q2IJ87</accession>
<evidence type="ECO:0000255" key="1">
    <source>
        <dbReference type="HAMAP-Rule" id="MF_01369"/>
    </source>
</evidence>
<evidence type="ECO:0000305" key="2"/>
<feature type="chain" id="PRO_0000272695" description="Large ribosomal subunit protein uL23">
    <location>
        <begin position="1"/>
        <end position="97"/>
    </location>
</feature>
<organism>
    <name type="scientific">Anaeromyxobacter dehalogenans (strain 2CP-C)</name>
    <dbReference type="NCBI Taxonomy" id="290397"/>
    <lineage>
        <taxon>Bacteria</taxon>
        <taxon>Pseudomonadati</taxon>
        <taxon>Myxococcota</taxon>
        <taxon>Myxococcia</taxon>
        <taxon>Myxococcales</taxon>
        <taxon>Cystobacterineae</taxon>
        <taxon>Anaeromyxobacteraceae</taxon>
        <taxon>Anaeromyxobacter</taxon>
    </lineage>
</organism>
<gene>
    <name evidence="1" type="primary">rplW</name>
    <name type="ordered locus">Adeh_1944</name>
</gene>
<keyword id="KW-1185">Reference proteome</keyword>
<keyword id="KW-0687">Ribonucleoprotein</keyword>
<keyword id="KW-0689">Ribosomal protein</keyword>
<keyword id="KW-0694">RNA-binding</keyword>
<keyword id="KW-0699">rRNA-binding</keyword>